<keyword id="KW-1005">Bacterial flagellum biogenesis</keyword>
<keyword id="KW-0143">Chaperone</keyword>
<keyword id="KW-0963">Cytoplasm</keyword>
<keyword id="KW-1185">Reference proteome</keyword>
<keyword id="KW-0678">Repressor</keyword>
<keyword id="KW-0804">Transcription</keyword>
<keyword id="KW-0805">Transcription regulation</keyword>
<protein>
    <recommendedName>
        <fullName evidence="1">Flagellar protein FliT</fullName>
    </recommendedName>
</protein>
<gene>
    <name evidence="1" type="primary">fliT</name>
    <name type="ordered locus">Ecok1_17730</name>
    <name type="ORF">APECO1_967</name>
</gene>
<accession>A1AC77</accession>
<proteinExistence type="inferred from homology"/>
<name>FLIT_ECOK1</name>
<feature type="chain" id="PRO_0000353882" description="Flagellar protein FliT">
    <location>
        <begin position="1"/>
        <end position="121"/>
    </location>
</feature>
<feature type="region of interest" description="Required for homodimerization" evidence="1">
    <location>
        <begin position="1"/>
        <end position="50"/>
    </location>
</feature>
<feature type="region of interest" description="FliD binding" evidence="1">
    <location>
        <begin position="60"/>
        <end position="98"/>
    </location>
</feature>
<reference key="1">
    <citation type="journal article" date="2007" name="J. Bacteriol.">
        <title>The genome sequence of avian pathogenic Escherichia coli strain O1:K1:H7 shares strong similarities with human extraintestinal pathogenic E. coli genomes.</title>
        <authorList>
            <person name="Johnson T.J."/>
            <person name="Kariyawasam S."/>
            <person name="Wannemuehler Y."/>
            <person name="Mangiamele P."/>
            <person name="Johnson S.J."/>
            <person name="Doetkott C."/>
            <person name="Skyberg J.A."/>
            <person name="Lynne A.M."/>
            <person name="Johnson J.R."/>
            <person name="Nolan L.K."/>
        </authorList>
    </citation>
    <scope>NUCLEOTIDE SEQUENCE [LARGE SCALE GENOMIC DNA]</scope>
</reference>
<organism>
    <name type="scientific">Escherichia coli O1:K1 / APEC</name>
    <dbReference type="NCBI Taxonomy" id="405955"/>
    <lineage>
        <taxon>Bacteria</taxon>
        <taxon>Pseudomonadati</taxon>
        <taxon>Pseudomonadota</taxon>
        <taxon>Gammaproteobacteria</taxon>
        <taxon>Enterobacterales</taxon>
        <taxon>Enterobacteriaceae</taxon>
        <taxon>Escherichia</taxon>
    </lineage>
</organism>
<comment type="function">
    <text evidence="1">Dual-function protein that regulates the transcription of class 2 flagellar operons and that also acts as an export chaperone for the filament-capping protein FliD. As a transcriptional regulator, acts as an anti-FlhDC factor; it directly binds FlhC, thus inhibiting the binding of the FlhC/FlhD complex to class 2 promoters, resulting in decreased expression of class 2 flagellar operons. As a chaperone, effects FliD transition to the membrane by preventing its premature polymerization, and by directing it to the export apparatus.</text>
</comment>
<comment type="subunit">
    <text evidence="1">Homodimer. Interacts with FliD and FlhC.</text>
</comment>
<comment type="subcellular location">
    <subcellularLocation>
        <location evidence="1">Cytoplasm</location>
        <location evidence="1">Cytosol</location>
    </subcellularLocation>
</comment>
<comment type="similarity">
    <text evidence="1">Belongs to the FliT family.</text>
</comment>
<evidence type="ECO:0000255" key="1">
    <source>
        <dbReference type="HAMAP-Rule" id="MF_01180"/>
    </source>
</evidence>
<sequence>MNNAPHLYFAWQQLVEKSQLMLRLATEEQWDELIASEMAYVNAVQEIAHLTEEVAPSTTMQEQLRPMLHLILDNESKVKQLLQIRMDELAKLVGQSSVQKSVLSAYGDQGGFVLAPQDNLF</sequence>
<dbReference type="EMBL" id="CP000468">
    <property type="protein sequence ID" value="ABJ01267.1"/>
    <property type="molecule type" value="Genomic_DNA"/>
</dbReference>
<dbReference type="RefSeq" id="WP_001057836.1">
    <property type="nucleotide sequence ID" value="NZ_CADILS010000028.1"/>
</dbReference>
<dbReference type="SMR" id="A1AC77"/>
<dbReference type="KEGG" id="ecv:APECO1_967"/>
<dbReference type="HOGENOM" id="CLU_155793_1_1_6"/>
<dbReference type="Proteomes" id="UP000008216">
    <property type="component" value="Chromosome"/>
</dbReference>
<dbReference type="GO" id="GO:0005829">
    <property type="term" value="C:cytosol"/>
    <property type="evidence" value="ECO:0007669"/>
    <property type="project" value="UniProtKB-SubCell"/>
</dbReference>
<dbReference type="GO" id="GO:0044781">
    <property type="term" value="P:bacterial-type flagellum organization"/>
    <property type="evidence" value="ECO:0007669"/>
    <property type="project" value="UniProtKB-KW"/>
</dbReference>
<dbReference type="GO" id="GO:1902209">
    <property type="term" value="P:negative regulation of bacterial-type flagellum assembly"/>
    <property type="evidence" value="ECO:0007669"/>
    <property type="project" value="UniProtKB-UniRule"/>
</dbReference>
<dbReference type="GO" id="GO:0006457">
    <property type="term" value="P:protein folding"/>
    <property type="evidence" value="ECO:0007669"/>
    <property type="project" value="UniProtKB-UniRule"/>
</dbReference>
<dbReference type="FunFam" id="1.20.58.380:FF:000001">
    <property type="entry name" value="Flagellar protein FliT"/>
    <property type="match status" value="1"/>
</dbReference>
<dbReference type="Gene3D" id="1.20.58.380">
    <property type="entry name" value="Flagellar protein flit"/>
    <property type="match status" value="1"/>
</dbReference>
<dbReference type="HAMAP" id="MF_01180">
    <property type="entry name" value="FliT"/>
    <property type="match status" value="1"/>
</dbReference>
<dbReference type="InterPro" id="IPR008622">
    <property type="entry name" value="FliT"/>
</dbReference>
<dbReference type="NCBIfam" id="NF007836">
    <property type="entry name" value="PRK10548.1"/>
    <property type="match status" value="1"/>
</dbReference>
<dbReference type="Pfam" id="PF05400">
    <property type="entry name" value="FliT"/>
    <property type="match status" value="1"/>
</dbReference>